<organism>
    <name type="scientific">Shigella flexneri</name>
    <dbReference type="NCBI Taxonomy" id="623"/>
    <lineage>
        <taxon>Bacteria</taxon>
        <taxon>Pseudomonadati</taxon>
        <taxon>Pseudomonadota</taxon>
        <taxon>Gammaproteobacteria</taxon>
        <taxon>Enterobacterales</taxon>
        <taxon>Enterobacteriaceae</taxon>
        <taxon>Shigella</taxon>
    </lineage>
</organism>
<accession>P0AFS0</accession>
<accession>P77505</accession>
<sequence length="264" mass="28722">MHSERAPFFLKLAAWGGVVFLHFPILIIAAYAFNTEDAAFSFPPQGLTLRWFSVAAQRSDILDAVTLSLKVAALATLIALVLGTLAAAALWRRDFFGKNAISLLLLLPIALPGIVTGLALLTAFKTINLEPGFFTIVVGHATFCVVVVFNNVIARFRRTSWSLVEASMDLGANGWQTFRYVVLPNLSSALLAGGMLAFALSFDEIIVTTFTAGHERTLPLWLLNQLGRPRDVPVTNVVALLVMLVTTLPILGAWWLTREGDNGQ</sequence>
<keyword id="KW-0997">Cell inner membrane</keyword>
<keyword id="KW-1003">Cell membrane</keyword>
<keyword id="KW-0472">Membrane</keyword>
<keyword id="KW-1185">Reference proteome</keyword>
<keyword id="KW-0812">Transmembrane</keyword>
<keyword id="KW-1133">Transmembrane helix</keyword>
<keyword id="KW-0813">Transport</keyword>
<evidence type="ECO:0000250" key="1">
    <source>
        <dbReference type="UniProtKB" id="P0AFR9"/>
    </source>
</evidence>
<evidence type="ECO:0000255" key="2"/>
<evidence type="ECO:0000255" key="3">
    <source>
        <dbReference type="PROSITE-ProRule" id="PRU00441"/>
    </source>
</evidence>
<evidence type="ECO:0000305" key="4"/>
<feature type="chain" id="PRO_0000060244" description="Inner membrane ABC transporter permease protein YdcV">
    <location>
        <begin position="1"/>
        <end position="264"/>
    </location>
</feature>
<feature type="topological domain" description="Cytoplasmic" evidence="4">
    <location>
        <begin position="1"/>
        <end position="12"/>
    </location>
</feature>
<feature type="transmembrane region" description="Helical" evidence="2">
    <location>
        <begin position="13"/>
        <end position="33"/>
    </location>
</feature>
<feature type="topological domain" description="Periplasmic" evidence="4">
    <location>
        <begin position="34"/>
        <end position="70"/>
    </location>
</feature>
<feature type="transmembrane region" description="Helical" evidence="2">
    <location>
        <begin position="71"/>
        <end position="91"/>
    </location>
</feature>
<feature type="topological domain" description="Cytoplasmic" evidence="4">
    <location>
        <begin position="92"/>
        <end position="100"/>
    </location>
</feature>
<feature type="transmembrane region" description="Helical" evidence="2">
    <location>
        <begin position="101"/>
        <end position="121"/>
    </location>
</feature>
<feature type="topological domain" description="Periplasmic" evidence="4">
    <location>
        <begin position="122"/>
        <end position="128"/>
    </location>
</feature>
<feature type="transmembrane region" description="Helical" evidence="2">
    <location>
        <begin position="129"/>
        <end position="149"/>
    </location>
</feature>
<feature type="topological domain" description="Cytoplasmic" evidence="4">
    <location>
        <begin position="150"/>
        <end position="189"/>
    </location>
</feature>
<feature type="transmembrane region" description="Helical" evidence="2">
    <location>
        <begin position="190"/>
        <end position="210"/>
    </location>
</feature>
<feature type="topological domain" description="Periplasmic" evidence="4">
    <location>
        <begin position="211"/>
        <end position="236"/>
    </location>
</feature>
<feature type="transmembrane region" description="Helical" evidence="2">
    <location>
        <begin position="237"/>
        <end position="257"/>
    </location>
</feature>
<feature type="topological domain" description="Cytoplasmic" evidence="1">
    <location>
        <begin position="258"/>
        <end position="264"/>
    </location>
</feature>
<feature type="domain" description="ABC transmembrane type-1" evidence="3">
    <location>
        <begin position="65"/>
        <end position="252"/>
    </location>
</feature>
<feature type="sequence conflict" description="In Ref. 2; AAP17226." evidence="4" ref="2">
    <original>I</original>
    <variation>N</variation>
    <location>
        <position position="250"/>
    </location>
</feature>
<name>YDCV_SHIFL</name>
<proteinExistence type="inferred from homology"/>
<comment type="function">
    <text evidence="1">Probably part of the ABC transporter complex YdcSTUV. Probably responsible for the translocation of the substrate across the membrane.</text>
</comment>
<comment type="subcellular location">
    <subcellularLocation>
        <location evidence="1">Cell inner membrane</location>
        <topology evidence="2">Multi-pass membrane protein</topology>
    </subcellularLocation>
</comment>
<comment type="similarity">
    <text evidence="4">Belongs to the binding-protein-dependent transport system permease family. CysTW subfamily.</text>
</comment>
<dbReference type="EMBL" id="AE005674">
    <property type="protein sequence ID" value="AAN43346.1"/>
    <property type="molecule type" value="Genomic_DNA"/>
</dbReference>
<dbReference type="EMBL" id="AE014073">
    <property type="protein sequence ID" value="AAP17226.1"/>
    <property type="molecule type" value="Genomic_DNA"/>
</dbReference>
<dbReference type="RefSeq" id="NP_707639.1">
    <property type="nucleotide sequence ID" value="NC_004337.2"/>
</dbReference>
<dbReference type="RefSeq" id="WP_000555458.1">
    <property type="nucleotide sequence ID" value="NZ_WPGW01000272.1"/>
</dbReference>
<dbReference type="SMR" id="P0AFS0"/>
<dbReference type="STRING" id="198214.SF1775"/>
<dbReference type="PaxDb" id="198214-SF1775"/>
<dbReference type="KEGG" id="sfl:SF1775"/>
<dbReference type="KEGG" id="sfx:S1906"/>
<dbReference type="PATRIC" id="fig|198214.7.peg.2102"/>
<dbReference type="HOGENOM" id="CLU_016047_3_0_6"/>
<dbReference type="Proteomes" id="UP000001006">
    <property type="component" value="Chromosome"/>
</dbReference>
<dbReference type="Proteomes" id="UP000002673">
    <property type="component" value="Chromosome"/>
</dbReference>
<dbReference type="GO" id="GO:0005886">
    <property type="term" value="C:plasma membrane"/>
    <property type="evidence" value="ECO:0007669"/>
    <property type="project" value="UniProtKB-SubCell"/>
</dbReference>
<dbReference type="GO" id="GO:0055085">
    <property type="term" value="P:transmembrane transport"/>
    <property type="evidence" value="ECO:0007669"/>
    <property type="project" value="InterPro"/>
</dbReference>
<dbReference type="CDD" id="cd06261">
    <property type="entry name" value="TM_PBP2"/>
    <property type="match status" value="1"/>
</dbReference>
<dbReference type="FunFam" id="1.10.3720.10:FF:000039">
    <property type="entry name" value="Inner membrane ABC transporter permease ydcV"/>
    <property type="match status" value="1"/>
</dbReference>
<dbReference type="Gene3D" id="1.10.3720.10">
    <property type="entry name" value="MetI-like"/>
    <property type="match status" value="1"/>
</dbReference>
<dbReference type="InterPro" id="IPR000515">
    <property type="entry name" value="MetI-like"/>
</dbReference>
<dbReference type="InterPro" id="IPR035906">
    <property type="entry name" value="MetI-like_sf"/>
</dbReference>
<dbReference type="PANTHER" id="PTHR43357">
    <property type="entry name" value="INNER MEMBRANE ABC TRANSPORTER PERMEASE PROTEIN YDCV"/>
    <property type="match status" value="1"/>
</dbReference>
<dbReference type="PANTHER" id="PTHR43357:SF4">
    <property type="entry name" value="INNER MEMBRANE ABC TRANSPORTER PERMEASE PROTEIN YDCV"/>
    <property type="match status" value="1"/>
</dbReference>
<dbReference type="Pfam" id="PF00528">
    <property type="entry name" value="BPD_transp_1"/>
    <property type="match status" value="1"/>
</dbReference>
<dbReference type="SUPFAM" id="SSF161098">
    <property type="entry name" value="MetI-like"/>
    <property type="match status" value="1"/>
</dbReference>
<dbReference type="PROSITE" id="PS50928">
    <property type="entry name" value="ABC_TM1"/>
    <property type="match status" value="1"/>
</dbReference>
<protein>
    <recommendedName>
        <fullName evidence="1">Inner membrane ABC transporter permease protein YdcV</fullName>
    </recommendedName>
</protein>
<gene>
    <name type="primary">ydcV</name>
    <name type="ordered locus">SF1774.1</name>
    <name type="ordered locus">S1906</name>
</gene>
<reference key="1">
    <citation type="journal article" date="2002" name="Nucleic Acids Res.">
        <title>Genome sequence of Shigella flexneri 2a: insights into pathogenicity through comparison with genomes of Escherichia coli K12 and O157.</title>
        <authorList>
            <person name="Jin Q."/>
            <person name="Yuan Z."/>
            <person name="Xu J."/>
            <person name="Wang Y."/>
            <person name="Shen Y."/>
            <person name="Lu W."/>
            <person name="Wang J."/>
            <person name="Liu H."/>
            <person name="Yang J."/>
            <person name="Yang F."/>
            <person name="Zhang X."/>
            <person name="Zhang J."/>
            <person name="Yang G."/>
            <person name="Wu H."/>
            <person name="Qu D."/>
            <person name="Dong J."/>
            <person name="Sun L."/>
            <person name="Xue Y."/>
            <person name="Zhao A."/>
            <person name="Gao Y."/>
            <person name="Zhu J."/>
            <person name="Kan B."/>
            <person name="Ding K."/>
            <person name="Chen S."/>
            <person name="Cheng H."/>
            <person name="Yao Z."/>
            <person name="He B."/>
            <person name="Chen R."/>
            <person name="Ma D."/>
            <person name="Qiang B."/>
            <person name="Wen Y."/>
            <person name="Hou Y."/>
            <person name="Yu J."/>
        </authorList>
    </citation>
    <scope>NUCLEOTIDE SEQUENCE [LARGE SCALE GENOMIC DNA]</scope>
    <source>
        <strain>301 / Serotype 2a</strain>
    </source>
</reference>
<reference key="2">
    <citation type="journal article" date="2003" name="Infect. Immun.">
        <title>Complete genome sequence and comparative genomics of Shigella flexneri serotype 2a strain 2457T.</title>
        <authorList>
            <person name="Wei J."/>
            <person name="Goldberg M.B."/>
            <person name="Burland V."/>
            <person name="Venkatesan M.M."/>
            <person name="Deng W."/>
            <person name="Fournier G."/>
            <person name="Mayhew G.F."/>
            <person name="Plunkett G. III"/>
            <person name="Rose D.J."/>
            <person name="Darling A."/>
            <person name="Mau B."/>
            <person name="Perna N.T."/>
            <person name="Payne S.M."/>
            <person name="Runyen-Janecky L.J."/>
            <person name="Zhou S."/>
            <person name="Schwartz D.C."/>
            <person name="Blattner F.R."/>
        </authorList>
    </citation>
    <scope>NUCLEOTIDE SEQUENCE [LARGE SCALE GENOMIC DNA]</scope>
    <source>
        <strain>ATCC 700930 / 2457T / Serotype 2a</strain>
    </source>
</reference>